<evidence type="ECO:0000255" key="1">
    <source>
        <dbReference type="HAMAP-Rule" id="MF_03119"/>
    </source>
</evidence>
<evidence type="ECO:0000312" key="2">
    <source>
        <dbReference type="Proteomes" id="UP000008524"/>
    </source>
</evidence>
<dbReference type="EC" id="5.3.1.23" evidence="1"/>
<dbReference type="EMBL" id="CH464491">
    <property type="protein sequence ID" value="EAN80052.1"/>
    <property type="molecule type" value="Genomic_DNA"/>
</dbReference>
<dbReference type="RefSeq" id="XP_829164.1">
    <property type="nucleotide sequence ID" value="XM_824071.1"/>
</dbReference>
<dbReference type="SMR" id="Q383H9"/>
<dbReference type="FunCoup" id="Q383H9">
    <property type="interactions" value="191"/>
</dbReference>
<dbReference type="STRING" id="185431.Q383H9"/>
<dbReference type="PaxDb" id="5691-EAN80052"/>
<dbReference type="GeneID" id="3665668"/>
<dbReference type="KEGG" id="tbr:Tb11.01.2780"/>
<dbReference type="VEuPathDB" id="TriTrypDB:Tb927.11.10990"/>
<dbReference type="eggNOG" id="KOG1468">
    <property type="taxonomic scope" value="Eukaryota"/>
</dbReference>
<dbReference type="InParanoid" id="Q383H9"/>
<dbReference type="OrthoDB" id="2461at2759"/>
<dbReference type="UniPathway" id="UPA00904">
    <property type="reaction ID" value="UER00874"/>
</dbReference>
<dbReference type="Proteomes" id="UP000008524">
    <property type="component" value="Chromosome 11 Scaffold 1"/>
</dbReference>
<dbReference type="GO" id="GO:0005851">
    <property type="term" value="C:eukaryotic translation initiation factor 2B complex"/>
    <property type="evidence" value="ECO:0000255"/>
    <property type="project" value="GeneDB"/>
</dbReference>
<dbReference type="GO" id="GO:0005634">
    <property type="term" value="C:nucleus"/>
    <property type="evidence" value="ECO:0007669"/>
    <property type="project" value="UniProtKB-SubCell"/>
</dbReference>
<dbReference type="GO" id="GO:0005525">
    <property type="term" value="F:GTP binding"/>
    <property type="evidence" value="ECO:0000255"/>
    <property type="project" value="GeneDB"/>
</dbReference>
<dbReference type="GO" id="GO:0046523">
    <property type="term" value="F:S-methyl-5-thioribose-1-phosphate isomerase activity"/>
    <property type="evidence" value="ECO:0000318"/>
    <property type="project" value="GO_Central"/>
</dbReference>
<dbReference type="GO" id="GO:0003743">
    <property type="term" value="F:translation initiation factor activity"/>
    <property type="evidence" value="ECO:0000255"/>
    <property type="project" value="GeneDB"/>
</dbReference>
<dbReference type="GO" id="GO:0019509">
    <property type="term" value="P:L-methionine salvage from methylthioadenosine"/>
    <property type="evidence" value="ECO:0000318"/>
    <property type="project" value="GO_Central"/>
</dbReference>
<dbReference type="GO" id="GO:0006413">
    <property type="term" value="P:translational initiation"/>
    <property type="evidence" value="ECO:0000255"/>
    <property type="project" value="GeneDB"/>
</dbReference>
<dbReference type="FunFam" id="1.20.120.420:FF:000001">
    <property type="entry name" value="Methylthioribose-1-phosphate isomerase"/>
    <property type="match status" value="1"/>
</dbReference>
<dbReference type="FunFam" id="3.40.50.10470:FF:000006">
    <property type="entry name" value="Methylthioribose-1-phosphate isomerase"/>
    <property type="match status" value="1"/>
</dbReference>
<dbReference type="Gene3D" id="1.20.120.420">
    <property type="entry name" value="translation initiation factor eif-2b, domain 1"/>
    <property type="match status" value="1"/>
</dbReference>
<dbReference type="Gene3D" id="3.40.50.10470">
    <property type="entry name" value="Translation initiation factor eif-2b, domain 2"/>
    <property type="match status" value="1"/>
</dbReference>
<dbReference type="HAMAP" id="MF_01678">
    <property type="entry name" value="Salvage_MtnA"/>
    <property type="match status" value="1"/>
</dbReference>
<dbReference type="InterPro" id="IPR000649">
    <property type="entry name" value="IF-2B-related"/>
</dbReference>
<dbReference type="InterPro" id="IPR005251">
    <property type="entry name" value="IF-M1Pi"/>
</dbReference>
<dbReference type="InterPro" id="IPR042529">
    <property type="entry name" value="IF_2B-like_C"/>
</dbReference>
<dbReference type="InterPro" id="IPR011559">
    <property type="entry name" value="Initiation_fac_2B_a/b/d"/>
</dbReference>
<dbReference type="InterPro" id="IPR027363">
    <property type="entry name" value="M1Pi_N"/>
</dbReference>
<dbReference type="InterPro" id="IPR037171">
    <property type="entry name" value="NagB/RpiA_transferase-like"/>
</dbReference>
<dbReference type="NCBIfam" id="TIGR00524">
    <property type="entry name" value="eIF-2B_rel"/>
    <property type="match status" value="1"/>
</dbReference>
<dbReference type="NCBIfam" id="NF004326">
    <property type="entry name" value="PRK05720.1"/>
    <property type="match status" value="1"/>
</dbReference>
<dbReference type="NCBIfam" id="TIGR00512">
    <property type="entry name" value="salvage_mtnA"/>
    <property type="match status" value="1"/>
</dbReference>
<dbReference type="PANTHER" id="PTHR43475">
    <property type="entry name" value="METHYLTHIORIBOSE-1-PHOSPHATE ISOMERASE"/>
    <property type="match status" value="1"/>
</dbReference>
<dbReference type="PANTHER" id="PTHR43475:SF1">
    <property type="entry name" value="METHYLTHIORIBOSE-1-PHOSPHATE ISOMERASE"/>
    <property type="match status" value="1"/>
</dbReference>
<dbReference type="Pfam" id="PF01008">
    <property type="entry name" value="IF-2B"/>
    <property type="match status" value="1"/>
</dbReference>
<dbReference type="SUPFAM" id="SSF100950">
    <property type="entry name" value="NagB/RpiA/CoA transferase-like"/>
    <property type="match status" value="1"/>
</dbReference>
<name>MTNA_TRYB2</name>
<gene>
    <name type="ORF">Tb11.01.2780</name>
</gene>
<feature type="chain" id="PRO_0000402002" description="Methylthioribose-1-phosphate isomerase">
    <location>
        <begin position="1"/>
        <end position="386"/>
    </location>
</feature>
<feature type="active site" description="Proton donor" evidence="1">
    <location>
        <position position="255"/>
    </location>
</feature>
<feature type="site" description="Transition state stabilizer" evidence="1">
    <location>
        <position position="175"/>
    </location>
</feature>
<reference key="1">
    <citation type="journal article" date="2005" name="Science">
        <title>The genome of the African trypanosome Trypanosoma brucei.</title>
        <authorList>
            <person name="Berriman M."/>
            <person name="Ghedin E."/>
            <person name="Hertz-Fowler C."/>
            <person name="Blandin G."/>
            <person name="Renauld H."/>
            <person name="Bartholomeu D.C."/>
            <person name="Lennard N.J."/>
            <person name="Caler E."/>
            <person name="Hamlin N.E."/>
            <person name="Haas B."/>
            <person name="Bohme U."/>
            <person name="Hannick L."/>
            <person name="Aslett M.A."/>
            <person name="Shallom J."/>
            <person name="Marcello L."/>
            <person name="Hou L."/>
            <person name="Wickstead B."/>
            <person name="Alsmark U.C.M."/>
            <person name="Arrowsmith C."/>
            <person name="Atkin R.J."/>
            <person name="Barron A.J."/>
            <person name="Bringaud F."/>
            <person name="Brooks K."/>
            <person name="Carrington M."/>
            <person name="Cherevach I."/>
            <person name="Chillingworth T.J."/>
            <person name="Churcher C."/>
            <person name="Clark L.N."/>
            <person name="Corton C.H."/>
            <person name="Cronin A."/>
            <person name="Davies R.M."/>
            <person name="Doggett J."/>
            <person name="Djikeng A."/>
            <person name="Feldblyum T."/>
            <person name="Field M.C."/>
            <person name="Fraser A."/>
            <person name="Goodhead I."/>
            <person name="Hance Z."/>
            <person name="Harper D."/>
            <person name="Harris B.R."/>
            <person name="Hauser H."/>
            <person name="Hostetler J."/>
            <person name="Ivens A."/>
            <person name="Jagels K."/>
            <person name="Johnson D."/>
            <person name="Johnson J."/>
            <person name="Jones K."/>
            <person name="Kerhornou A.X."/>
            <person name="Koo H."/>
            <person name="Larke N."/>
            <person name="Landfear S."/>
            <person name="Larkin C."/>
            <person name="Leech V."/>
            <person name="Line A."/>
            <person name="Lord A."/>
            <person name="Macleod A."/>
            <person name="Mooney P.J."/>
            <person name="Moule S."/>
            <person name="Martin D.M."/>
            <person name="Morgan G.W."/>
            <person name="Mungall K."/>
            <person name="Norbertczak H."/>
            <person name="Ormond D."/>
            <person name="Pai G."/>
            <person name="Peacock C.S."/>
            <person name="Peterson J."/>
            <person name="Quail M.A."/>
            <person name="Rabbinowitsch E."/>
            <person name="Rajandream M.A."/>
            <person name="Reitter C."/>
            <person name="Salzberg S.L."/>
            <person name="Sanders M."/>
            <person name="Schobel S."/>
            <person name="Sharp S."/>
            <person name="Simmonds M."/>
            <person name="Simpson A.J."/>
            <person name="Tallon L."/>
            <person name="Turner C.M."/>
            <person name="Tait A."/>
            <person name="Tivey A.R."/>
            <person name="Van Aken S."/>
            <person name="Walker D."/>
            <person name="Wanless D."/>
            <person name="Wang S."/>
            <person name="White B."/>
            <person name="White O."/>
            <person name="Whitehead S."/>
            <person name="Woodward J."/>
            <person name="Wortman J."/>
            <person name="Adams M.D."/>
            <person name="Embley T.M."/>
            <person name="Gull K."/>
            <person name="Ullu E."/>
            <person name="Barry J.D."/>
            <person name="Fairlamb A.H."/>
            <person name="Opperdoes F."/>
            <person name="Barrell B.G."/>
            <person name="Donelson J.E."/>
            <person name="Hall N."/>
            <person name="Fraser C.M."/>
            <person name="Melville S.E."/>
            <person name="El-Sayed N.M.A."/>
        </authorList>
    </citation>
    <scope>NUCLEOTIDE SEQUENCE [LARGE SCALE GENOMIC DNA]</scope>
    <source>
        <strain evidence="2">927/4 GUTat10.1</strain>
    </source>
</reference>
<proteinExistence type="inferred from homology"/>
<keyword id="KW-0028">Amino-acid biosynthesis</keyword>
<keyword id="KW-0963">Cytoplasm</keyword>
<keyword id="KW-0413">Isomerase</keyword>
<keyword id="KW-0486">Methionine biosynthesis</keyword>
<keyword id="KW-0539">Nucleus</keyword>
<keyword id="KW-1185">Reference proteome</keyword>
<protein>
    <recommendedName>
        <fullName evidence="1">Methylthioribose-1-phosphate isomerase</fullName>
        <shortName evidence="1">M1Pi</shortName>
        <shortName evidence="1">MTR-1-P isomerase</shortName>
        <ecNumber evidence="1">5.3.1.23</ecNumber>
    </recommendedName>
    <alternativeName>
        <fullName evidence="1">S-methyl-5-thioribose-1-phosphate isomerase</fullName>
    </alternativeName>
    <alternativeName>
        <fullName evidence="1">Translation initiation factor eIF-2B subunit alpha/beta/delta-like protein</fullName>
    </alternativeName>
</protein>
<sequence length="386" mass="42136">MSSAHNTLESIKYRRGVLQLLDQRRLPLETVYCDITSIDDICCAIKEMRVRGAPAIAVSAALALAVVAERELKEQRQNSVWKTADDMRQFLLMSCDKMMSARPTAVNLSKVLIQLKKDIETDKANTMEAVLETCVQLAEKIYAADVSFNERIMRHGAAHLLKLASKERVNILTICNTGALATSRYGTALGIVRQLFYEGHLQHLYACETRPWNQGARLTVYECVQENIPCTLICDSAVSAVMKTHDIDAVVVGADRICKNGDTANKIGTYNLAVAAAYHKVPFFVAAPSTTLDPLTPDGEGVVIEEREATEITHIASGGGGLQSDKSNSDYGRKRVVADGPHLKVWNPVFDITPASLITGGIITEHGVFPPATAGPLFDISRIVEP</sequence>
<comment type="function">
    <text evidence="1">Catalyzes the interconversion of methylthioribose-1-phosphate (MTR-1-P) into methylthioribulose-1-phosphate (MTRu-1-P).</text>
</comment>
<comment type="catalytic activity">
    <reaction evidence="1">
        <text>5-(methylsulfanyl)-alpha-D-ribose 1-phosphate = 5-(methylsulfanyl)-D-ribulose 1-phosphate</text>
        <dbReference type="Rhea" id="RHEA:19989"/>
        <dbReference type="ChEBI" id="CHEBI:58533"/>
        <dbReference type="ChEBI" id="CHEBI:58548"/>
        <dbReference type="EC" id="5.3.1.23"/>
    </reaction>
</comment>
<comment type="pathway">
    <text evidence="1">Amino-acid biosynthesis; L-methionine biosynthesis via salvage pathway; L-methionine from S-methyl-5-thio-alpha-D-ribose 1-phosphate: step 1/6.</text>
</comment>
<comment type="subcellular location">
    <subcellularLocation>
        <location evidence="1">Cytoplasm</location>
    </subcellularLocation>
    <subcellularLocation>
        <location evidence="1">Nucleus</location>
    </subcellularLocation>
</comment>
<comment type="similarity">
    <text evidence="1">Belongs to the eIF-2B alpha/beta/delta subunits family. MtnA subfamily.</text>
</comment>
<organism>
    <name type="scientific">Trypanosoma brucei brucei (strain 927/4 GUTat10.1)</name>
    <dbReference type="NCBI Taxonomy" id="185431"/>
    <lineage>
        <taxon>Eukaryota</taxon>
        <taxon>Discoba</taxon>
        <taxon>Euglenozoa</taxon>
        <taxon>Kinetoplastea</taxon>
        <taxon>Metakinetoplastina</taxon>
        <taxon>Trypanosomatida</taxon>
        <taxon>Trypanosomatidae</taxon>
        <taxon>Trypanosoma</taxon>
    </lineage>
</organism>
<accession>Q383H9</accession>